<reference key="1">
    <citation type="submission" date="2003-04" db="EMBL/GenBank/DDBJ databases">
        <title>Genes for arsenite oxidation from Alcaligenes faecalis.</title>
        <authorList>
            <person name="Silver S."/>
            <person name="Phung L.T."/>
            <person name="Malo B.J."/>
        </authorList>
    </citation>
    <scope>NUCLEOTIDE SEQUENCE [GENOMIC DNA]</scope>
    <source>
        <strain>CCUG 2071 / LMG 3368 / NCIMB 8687</strain>
    </source>
</reference>
<keyword id="KW-1003">Cell membrane</keyword>
<keyword id="KW-0285">Flavoprotein</keyword>
<keyword id="KW-0288">FMN</keyword>
<keyword id="KW-0472">Membrane</keyword>
<keyword id="KW-0560">Oxidoreductase</keyword>
<evidence type="ECO:0000255" key="1">
    <source>
        <dbReference type="HAMAP-Rule" id="MF_01559"/>
    </source>
</evidence>
<proteinExistence type="inferred from homology"/>
<accession>Q6WB83</accession>
<protein>
    <recommendedName>
        <fullName evidence="1">L-lactate dehydrogenase</fullName>
        <ecNumber evidence="1">1.1.-.-</ecNumber>
    </recommendedName>
</protein>
<dbReference type="EC" id="1.1.-.-" evidence="1"/>
<dbReference type="EMBL" id="AY297781">
    <property type="protein sequence ID" value="AAQ19817.1"/>
    <property type="molecule type" value="Genomic_DNA"/>
</dbReference>
<dbReference type="SMR" id="Q6WB83"/>
<dbReference type="STRING" id="511.UZ73_08330"/>
<dbReference type="eggNOG" id="COG1304">
    <property type="taxonomic scope" value="Bacteria"/>
</dbReference>
<dbReference type="GO" id="GO:0005886">
    <property type="term" value="C:plasma membrane"/>
    <property type="evidence" value="ECO:0007669"/>
    <property type="project" value="UniProtKB-SubCell"/>
</dbReference>
<dbReference type="GO" id="GO:0010181">
    <property type="term" value="F:FMN binding"/>
    <property type="evidence" value="ECO:0007669"/>
    <property type="project" value="InterPro"/>
</dbReference>
<dbReference type="GO" id="GO:0004459">
    <property type="term" value="F:L-lactate dehydrogenase activity"/>
    <property type="evidence" value="ECO:0007669"/>
    <property type="project" value="UniProtKB-UniRule"/>
</dbReference>
<dbReference type="GO" id="GO:0009060">
    <property type="term" value="P:aerobic respiration"/>
    <property type="evidence" value="ECO:0007669"/>
    <property type="project" value="TreeGrafter"/>
</dbReference>
<dbReference type="GO" id="GO:0006089">
    <property type="term" value="P:lactate metabolic process"/>
    <property type="evidence" value="ECO:0007669"/>
    <property type="project" value="UniProtKB-UniRule"/>
</dbReference>
<dbReference type="CDD" id="cd02809">
    <property type="entry name" value="alpha_hydroxyacid_oxid_FMN"/>
    <property type="match status" value="1"/>
</dbReference>
<dbReference type="FunFam" id="3.20.20.70:FF:000029">
    <property type="entry name" value="L-lactate dehydrogenase"/>
    <property type="match status" value="1"/>
</dbReference>
<dbReference type="Gene3D" id="3.20.20.70">
    <property type="entry name" value="Aldolase class I"/>
    <property type="match status" value="1"/>
</dbReference>
<dbReference type="HAMAP" id="MF_01559">
    <property type="entry name" value="L_lact_dehydr"/>
    <property type="match status" value="1"/>
</dbReference>
<dbReference type="InterPro" id="IPR013785">
    <property type="entry name" value="Aldolase_TIM"/>
</dbReference>
<dbReference type="InterPro" id="IPR012133">
    <property type="entry name" value="Alpha-hydoxy_acid_DH_FMN"/>
</dbReference>
<dbReference type="InterPro" id="IPR000262">
    <property type="entry name" value="FMN-dep_DH"/>
</dbReference>
<dbReference type="InterPro" id="IPR037396">
    <property type="entry name" value="FMN_HAD"/>
</dbReference>
<dbReference type="InterPro" id="IPR008259">
    <property type="entry name" value="FMN_hydac_DH_AS"/>
</dbReference>
<dbReference type="InterPro" id="IPR020920">
    <property type="entry name" value="LldD"/>
</dbReference>
<dbReference type="NCBIfam" id="NF033901">
    <property type="entry name" value="L_lactate_LldD"/>
    <property type="match status" value="1"/>
</dbReference>
<dbReference type="NCBIfam" id="NF008398">
    <property type="entry name" value="PRK11197.1"/>
    <property type="match status" value="1"/>
</dbReference>
<dbReference type="PANTHER" id="PTHR10578:SF85">
    <property type="entry name" value="L-LACTATE DEHYDROGENASE"/>
    <property type="match status" value="1"/>
</dbReference>
<dbReference type="PANTHER" id="PTHR10578">
    <property type="entry name" value="S -2-HYDROXY-ACID OXIDASE-RELATED"/>
    <property type="match status" value="1"/>
</dbReference>
<dbReference type="Pfam" id="PF01070">
    <property type="entry name" value="FMN_dh"/>
    <property type="match status" value="1"/>
</dbReference>
<dbReference type="PIRSF" id="PIRSF000138">
    <property type="entry name" value="Al-hdrx_acd_dh"/>
    <property type="match status" value="1"/>
</dbReference>
<dbReference type="SUPFAM" id="SSF51395">
    <property type="entry name" value="FMN-linked oxidoreductases"/>
    <property type="match status" value="1"/>
</dbReference>
<dbReference type="PROSITE" id="PS00557">
    <property type="entry name" value="FMN_HYDROXY_ACID_DH_1"/>
    <property type="match status" value="1"/>
</dbReference>
<dbReference type="PROSITE" id="PS51349">
    <property type="entry name" value="FMN_HYDROXY_ACID_DH_2"/>
    <property type="match status" value="1"/>
</dbReference>
<organism>
    <name type="scientific">Alcaligenes faecalis</name>
    <dbReference type="NCBI Taxonomy" id="511"/>
    <lineage>
        <taxon>Bacteria</taxon>
        <taxon>Pseudomonadati</taxon>
        <taxon>Pseudomonadota</taxon>
        <taxon>Betaproteobacteria</taxon>
        <taxon>Burkholderiales</taxon>
        <taxon>Alcaligenaceae</taxon>
        <taxon>Alcaligenes</taxon>
    </lineage>
</organism>
<sequence>MIISSSTDYRRAAQKRLPPFLFHYIDGGAYAEHTLRRNVDDLAEVALRQRVLKDMSQLDTSIDLFGEKLSMPVALSPVGLTGMYARRGEVQAARAADARGIPFTMSSVSVCPIEEVAPRLSRPMWFQLYVLKDRGFMRNALERAQAAGCSTLVFTVDMPVPGARYRDAHSGMSGPNAALRRYAQAVMHPRWAWDVGLLGRPHDLGNISRYLGKPTGLEDYMGYLGANFDPSISWKDLEWIREFWKGPMLIKGILDPDDARDAVRFGADGIIVSNHGGRQLDGVLSSARALPAIADAVKGQIKILADSGIRSGLDVVRMIALGADAAMLGRAYIYALAAAGQSGVDHLLGLIEKEIRVAMTLTSVSSISQITSELLVREP</sequence>
<gene>
    <name evidence="1" type="primary">lldD</name>
</gene>
<name>LLDD_ALCFA</name>
<comment type="function">
    <text evidence="1">Catalyzes the conversion of L-lactate to pyruvate. Is coupled to the respiratory chain.</text>
</comment>
<comment type="catalytic activity">
    <reaction evidence="1">
        <text>(S)-lactate + A = pyruvate + AH2</text>
        <dbReference type="Rhea" id="RHEA:45816"/>
        <dbReference type="ChEBI" id="CHEBI:13193"/>
        <dbReference type="ChEBI" id="CHEBI:15361"/>
        <dbReference type="ChEBI" id="CHEBI:16651"/>
        <dbReference type="ChEBI" id="CHEBI:17499"/>
    </reaction>
</comment>
<comment type="cofactor">
    <cofactor evidence="1">
        <name>FMN</name>
        <dbReference type="ChEBI" id="CHEBI:58210"/>
    </cofactor>
</comment>
<comment type="subcellular location">
    <subcellularLocation>
        <location evidence="1">Cell membrane</location>
        <topology evidence="1">Peripheral membrane protein</topology>
    </subcellularLocation>
</comment>
<comment type="similarity">
    <text evidence="1">Belongs to the FMN-dependent alpha-hydroxy acid dehydrogenase family.</text>
</comment>
<feature type="chain" id="PRO_0000206330" description="L-lactate dehydrogenase">
    <location>
        <begin position="1"/>
        <end position="379"/>
    </location>
</feature>
<feature type="domain" description="FMN hydroxy acid dehydrogenase" evidence="1">
    <location>
        <begin position="1"/>
        <end position="379"/>
    </location>
</feature>
<feature type="active site" description="Proton acceptor" evidence="1">
    <location>
        <position position="275"/>
    </location>
</feature>
<feature type="binding site" evidence="1">
    <location>
        <position position="24"/>
    </location>
    <ligand>
        <name>substrate</name>
    </ligand>
</feature>
<feature type="binding site" evidence="1">
    <location>
        <position position="106"/>
    </location>
    <ligand>
        <name>FMN</name>
        <dbReference type="ChEBI" id="CHEBI:58210"/>
    </ligand>
</feature>
<feature type="binding site" evidence="1">
    <location>
        <position position="127"/>
    </location>
    <ligand>
        <name>FMN</name>
        <dbReference type="ChEBI" id="CHEBI:58210"/>
    </ligand>
</feature>
<feature type="binding site" evidence="1">
    <location>
        <position position="129"/>
    </location>
    <ligand>
        <name>substrate</name>
    </ligand>
</feature>
<feature type="binding site" evidence="1">
    <location>
        <position position="155"/>
    </location>
    <ligand>
        <name>FMN</name>
        <dbReference type="ChEBI" id="CHEBI:58210"/>
    </ligand>
</feature>
<feature type="binding site" evidence="1">
    <location>
        <position position="164"/>
    </location>
    <ligand>
        <name>substrate</name>
    </ligand>
</feature>
<feature type="binding site" evidence="1">
    <location>
        <position position="251"/>
    </location>
    <ligand>
        <name>FMN</name>
        <dbReference type="ChEBI" id="CHEBI:58210"/>
    </ligand>
</feature>
<feature type="binding site" evidence="1">
    <location>
        <position position="278"/>
    </location>
    <ligand>
        <name>substrate</name>
    </ligand>
</feature>
<feature type="binding site" evidence="1">
    <location>
        <begin position="306"/>
        <end position="330"/>
    </location>
    <ligand>
        <name>FMN</name>
        <dbReference type="ChEBI" id="CHEBI:58210"/>
    </ligand>
</feature>